<dbReference type="EMBL" id="KP268612">
    <property type="protein sequence ID" value="AJD85825.1"/>
    <property type="molecule type" value="mRNA"/>
</dbReference>
<dbReference type="GO" id="GO:0005576">
    <property type="term" value="C:extracellular region"/>
    <property type="evidence" value="ECO:0007669"/>
    <property type="project" value="UniProtKB-SubCell"/>
</dbReference>
<dbReference type="GO" id="GO:0005179">
    <property type="term" value="F:hormone activity"/>
    <property type="evidence" value="ECO:0007669"/>
    <property type="project" value="UniProtKB-KW"/>
</dbReference>
<dbReference type="GO" id="GO:0090729">
    <property type="term" value="F:toxin activity"/>
    <property type="evidence" value="ECO:0007669"/>
    <property type="project" value="UniProtKB-KW"/>
</dbReference>
<dbReference type="GO" id="GO:0006006">
    <property type="term" value="P:glucose metabolic process"/>
    <property type="evidence" value="ECO:0007669"/>
    <property type="project" value="UniProtKB-KW"/>
</dbReference>
<dbReference type="CDD" id="cd04366">
    <property type="entry name" value="IlGF_insulin_bombyxin_like"/>
    <property type="match status" value="1"/>
</dbReference>
<dbReference type="Gene3D" id="1.10.100.10">
    <property type="entry name" value="Insulin-like"/>
    <property type="match status" value="1"/>
</dbReference>
<dbReference type="InterPro" id="IPR016179">
    <property type="entry name" value="Insulin-like"/>
</dbReference>
<dbReference type="InterPro" id="IPR036438">
    <property type="entry name" value="Insulin-like_sf"/>
</dbReference>
<dbReference type="InterPro" id="IPR016724">
    <property type="entry name" value="Insulin-rel_pep"/>
</dbReference>
<dbReference type="InterPro" id="IPR022353">
    <property type="entry name" value="Insulin_CS"/>
</dbReference>
<dbReference type="InterPro" id="IPR022352">
    <property type="entry name" value="Insulin_family"/>
</dbReference>
<dbReference type="Pfam" id="PF00049">
    <property type="entry name" value="Insulin"/>
    <property type="match status" value="1"/>
</dbReference>
<dbReference type="PIRSF" id="PIRSF018431">
    <property type="entry name" value="Molluscan_insulin_rel_peptide"/>
    <property type="match status" value="1"/>
</dbReference>
<dbReference type="PRINTS" id="PR00276">
    <property type="entry name" value="INSULINFAMLY"/>
</dbReference>
<dbReference type="SMART" id="SM00078">
    <property type="entry name" value="IlGF"/>
    <property type="match status" value="1"/>
</dbReference>
<dbReference type="SUPFAM" id="SSF56994">
    <property type="entry name" value="Insulin-like"/>
    <property type="match status" value="1"/>
</dbReference>
<dbReference type="PROSITE" id="PS00262">
    <property type="entry name" value="INSULIN"/>
    <property type="match status" value="1"/>
</dbReference>
<protein>
    <recommendedName>
        <fullName evidence="4">Con-Ins Im2</fullName>
    </recommendedName>
    <alternativeName>
        <fullName evidence="7">Insulin 2</fullName>
    </alternativeName>
    <component>
        <recommendedName>
            <fullName evidence="4">Con-Ins I2 B chain</fullName>
        </recommendedName>
    </component>
    <component>
        <recommendedName>
            <fullName evidence="4">Con-Ins I2 A chain</fullName>
        </recommendedName>
    </component>
</protein>
<proteinExistence type="evidence at transcript level"/>
<evidence type="ECO:0000250" key="1">
    <source>
        <dbReference type="UniProtKB" id="A0A0B5ABD9"/>
    </source>
</evidence>
<evidence type="ECO:0000250" key="2">
    <source>
        <dbReference type="UniProtKB" id="A0A0B5AC95"/>
    </source>
</evidence>
<evidence type="ECO:0000255" key="3"/>
<evidence type="ECO:0000303" key="4">
    <source>
    </source>
</evidence>
<evidence type="ECO:0000305" key="5"/>
<evidence type="ECO:0000305" key="6">
    <source>
    </source>
</evidence>
<evidence type="ECO:0000312" key="7">
    <source>
        <dbReference type="EMBL" id="AJD85825.1"/>
    </source>
</evidence>
<organism>
    <name type="scientific">Conus imperialis</name>
    <name type="common">Imperial cone</name>
    <dbReference type="NCBI Taxonomy" id="35631"/>
    <lineage>
        <taxon>Eukaryota</taxon>
        <taxon>Metazoa</taxon>
        <taxon>Spiralia</taxon>
        <taxon>Lophotrochozoa</taxon>
        <taxon>Mollusca</taxon>
        <taxon>Gastropoda</taxon>
        <taxon>Caenogastropoda</taxon>
        <taxon>Neogastropoda</taxon>
        <taxon>Conoidea</taxon>
        <taxon>Conidae</taxon>
        <taxon>Conus</taxon>
        <taxon>Stephanoconus</taxon>
    </lineage>
</organism>
<keyword id="KW-0119">Carbohydrate metabolism</keyword>
<keyword id="KW-0165">Cleavage on pair of basic residues</keyword>
<keyword id="KW-1015">Disulfide bond</keyword>
<keyword id="KW-0301">Gamma-carboxyglutamic acid</keyword>
<keyword id="KW-0313">Glucose metabolism</keyword>
<keyword id="KW-0372">Hormone</keyword>
<keyword id="KW-0964">Secreted</keyword>
<keyword id="KW-0732">Signal</keyword>
<keyword id="KW-0800">Toxin</keyword>
<reference key="1">
    <citation type="journal article" date="2015" name="Proc. Natl. Acad. Sci. U.S.A.">
        <title>Specialized insulin is used for chemical warfare by fish-hunting cone snails.</title>
        <authorList>
            <person name="Safavi-Hemami H."/>
            <person name="Gajewiak J."/>
            <person name="Karanth S."/>
            <person name="Robinson S.D."/>
            <person name="Ueberheide B."/>
            <person name="Douglass A.D."/>
            <person name="Schlegel A."/>
            <person name="Imperial J.S."/>
            <person name="Watkins M."/>
            <person name="Bandyopadhyay P.K."/>
            <person name="Yandell M."/>
            <person name="Li Q."/>
            <person name="Purcell A.W."/>
            <person name="Norton R.S."/>
            <person name="Ellgaard L."/>
            <person name="Olivera B.M."/>
        </authorList>
    </citation>
    <scope>NUCLEOTIDE SEQUENCE [MRNA]</scope>
    <source>
        <tissue>Venom gland</tissue>
    </source>
</reference>
<feature type="signal peptide" evidence="3">
    <location>
        <begin position="1"/>
        <end position="29"/>
    </location>
</feature>
<feature type="peptide" id="PRO_5002099638" description="Con-Ins I2 B chain" evidence="1">
    <location>
        <begin position="30"/>
        <end position="63"/>
    </location>
</feature>
<feature type="propeptide" id="PRO_0000439324" description="C peptide" evidence="1">
    <location>
        <begin position="64"/>
        <end position="110"/>
    </location>
</feature>
<feature type="peptide" id="PRO_0000439325" description="Con-Ins I2 A chain" evidence="1">
    <location>
        <begin position="111"/>
        <end position="140"/>
    </location>
</feature>
<feature type="modified residue" description="4-carboxyglutamate; partial" evidence="2">
    <location>
        <position position="134"/>
    </location>
</feature>
<feature type="disulfide bond" evidence="5">
    <location>
        <begin position="35"/>
        <end position="123"/>
    </location>
</feature>
<feature type="disulfide bond" description="Interchain (between B and A chains)" evidence="2">
    <location>
        <begin position="50"/>
        <end position="126"/>
    </location>
</feature>
<feature type="disulfide bond" description="Interchain (between B and A chains)" evidence="2">
    <location>
        <begin position="62"/>
        <end position="139"/>
    </location>
</feature>
<feature type="disulfide bond" evidence="2">
    <location>
        <begin position="125"/>
        <end position="130"/>
    </location>
</feature>
<name>INS2_CONIM</name>
<comment type="function">
    <text evidence="2">This venom insulin facilitates prey capture by rapidly inducing hypoglycemic shock. Intraperitoneal injection of this peptide into zebrafish lowers blood glucose with the same potency than human insulin. In vivo, when applied to water, this peptide reduces overall locomotor activity of zebrafish larvae, observed as a significant decrease in the percentage of time spent swimming and movement frequency.</text>
</comment>
<comment type="subunit">
    <text evidence="2">Heterodimer of A and B chains; disulfide-linked.</text>
</comment>
<comment type="subcellular location">
    <subcellularLocation>
        <location evidence="2">Secreted</location>
    </subcellularLocation>
</comment>
<comment type="tissue specificity">
    <text evidence="6">Expressed by the venom gland.</text>
</comment>
<comment type="similarity">
    <text>Belongs to the insulin family.</text>
</comment>
<sequence>MALTWPSSPPVLLTLLLSLLALQLCAVYGSYEHTCTLATRSRGAHPSGICGRNLARIVSVLCTPRGYVSNWFTKRSAPNKPAETFVDQNLRGVLLNKREALSYLRPREPRATRGTFGSQGITCECCFNQCTYYELLQYCN</sequence>
<accession>A0A0B5A8P8</accession>